<name>RLPA_AQUAE</name>
<dbReference type="EC" id="4.2.2.-" evidence="1"/>
<dbReference type="EMBL" id="AE000657">
    <property type="protein sequence ID" value="AAC07192.1"/>
    <property type="molecule type" value="Genomic_DNA"/>
</dbReference>
<dbReference type="PIR" id="H70400">
    <property type="entry name" value="H70400"/>
</dbReference>
<dbReference type="RefSeq" id="NP_213799.1">
    <property type="nucleotide sequence ID" value="NC_000918.1"/>
</dbReference>
<dbReference type="RefSeq" id="WP_010880737.1">
    <property type="nucleotide sequence ID" value="NC_000918.1"/>
</dbReference>
<dbReference type="SMR" id="O67235"/>
<dbReference type="STRING" id="224324.aq_1174"/>
<dbReference type="EnsemblBacteria" id="AAC07192">
    <property type="protein sequence ID" value="AAC07192"/>
    <property type="gene ID" value="aq_1174"/>
</dbReference>
<dbReference type="KEGG" id="aae:aq_1174"/>
<dbReference type="PATRIC" id="fig|224324.8.peg.912"/>
<dbReference type="eggNOG" id="COG0797">
    <property type="taxonomic scope" value="Bacteria"/>
</dbReference>
<dbReference type="HOGENOM" id="CLU_1299232_0_0_0"/>
<dbReference type="InParanoid" id="O67235"/>
<dbReference type="OrthoDB" id="9779128at2"/>
<dbReference type="Proteomes" id="UP000000798">
    <property type="component" value="Chromosome"/>
</dbReference>
<dbReference type="GO" id="GO:0005886">
    <property type="term" value="C:plasma membrane"/>
    <property type="evidence" value="ECO:0007669"/>
    <property type="project" value="UniProtKB-SubCell"/>
</dbReference>
<dbReference type="GO" id="GO:0008932">
    <property type="term" value="F:lytic endotransglycosylase activity"/>
    <property type="evidence" value="ECO:0007669"/>
    <property type="project" value="UniProtKB-UniRule"/>
</dbReference>
<dbReference type="GO" id="GO:0071555">
    <property type="term" value="P:cell wall organization"/>
    <property type="evidence" value="ECO:0007669"/>
    <property type="project" value="UniProtKB-KW"/>
</dbReference>
<dbReference type="GO" id="GO:0000270">
    <property type="term" value="P:peptidoglycan metabolic process"/>
    <property type="evidence" value="ECO:0007669"/>
    <property type="project" value="UniProtKB-UniRule"/>
</dbReference>
<dbReference type="CDD" id="cd22268">
    <property type="entry name" value="DPBB_RlpA-like"/>
    <property type="match status" value="1"/>
</dbReference>
<dbReference type="Gene3D" id="2.40.40.10">
    <property type="entry name" value="RlpA-like domain"/>
    <property type="match status" value="1"/>
</dbReference>
<dbReference type="HAMAP" id="MF_02071">
    <property type="entry name" value="RlpA"/>
    <property type="match status" value="1"/>
</dbReference>
<dbReference type="InterPro" id="IPR034718">
    <property type="entry name" value="RlpA"/>
</dbReference>
<dbReference type="InterPro" id="IPR009009">
    <property type="entry name" value="RlpA-like_DPBB"/>
</dbReference>
<dbReference type="InterPro" id="IPR036908">
    <property type="entry name" value="RlpA-like_sf"/>
</dbReference>
<dbReference type="InterPro" id="IPR012997">
    <property type="entry name" value="RplA"/>
</dbReference>
<dbReference type="NCBIfam" id="TIGR00413">
    <property type="entry name" value="rlpA"/>
    <property type="match status" value="1"/>
</dbReference>
<dbReference type="PANTHER" id="PTHR34183">
    <property type="entry name" value="ENDOLYTIC PEPTIDOGLYCAN TRANSGLYCOSYLASE RLPA"/>
    <property type="match status" value="1"/>
</dbReference>
<dbReference type="PANTHER" id="PTHR34183:SF1">
    <property type="entry name" value="ENDOLYTIC PEPTIDOGLYCAN TRANSGLYCOSYLASE RLPA"/>
    <property type="match status" value="1"/>
</dbReference>
<dbReference type="Pfam" id="PF03330">
    <property type="entry name" value="DPBB_1"/>
    <property type="match status" value="1"/>
</dbReference>
<dbReference type="SUPFAM" id="SSF50685">
    <property type="entry name" value="Barwin-like endoglucanases"/>
    <property type="match status" value="1"/>
</dbReference>
<dbReference type="PROSITE" id="PS51257">
    <property type="entry name" value="PROKAR_LIPOPROTEIN"/>
    <property type="match status" value="1"/>
</dbReference>
<accession>O67235</accession>
<proteinExistence type="inferred from homology"/>
<keyword id="KW-1003">Cell membrane</keyword>
<keyword id="KW-0961">Cell wall biogenesis/degradation</keyword>
<keyword id="KW-0449">Lipoprotein</keyword>
<keyword id="KW-0456">Lyase</keyword>
<keyword id="KW-0472">Membrane</keyword>
<keyword id="KW-0564">Palmitate</keyword>
<keyword id="KW-1185">Reference proteome</keyword>
<keyword id="KW-0732">Signal</keyword>
<gene>
    <name evidence="1" type="primary">rlpA</name>
    <name type="ordered locus">aq_1174</name>
</gene>
<evidence type="ECO:0000255" key="1">
    <source>
        <dbReference type="HAMAP-Rule" id="MF_02071"/>
    </source>
</evidence>
<reference key="1">
    <citation type="journal article" date="1998" name="Nature">
        <title>The complete genome of the hyperthermophilic bacterium Aquifex aeolicus.</title>
        <authorList>
            <person name="Deckert G."/>
            <person name="Warren P.V."/>
            <person name="Gaasterland T."/>
            <person name="Young W.G."/>
            <person name="Lenox A.L."/>
            <person name="Graham D.E."/>
            <person name="Overbeek R."/>
            <person name="Snead M.A."/>
            <person name="Keller M."/>
            <person name="Aujay M."/>
            <person name="Huber R."/>
            <person name="Feldman R.A."/>
            <person name="Short J.M."/>
            <person name="Olsen G.J."/>
            <person name="Swanson R.V."/>
        </authorList>
    </citation>
    <scope>NUCLEOTIDE SEQUENCE [LARGE SCALE GENOMIC DNA]</scope>
    <source>
        <strain>VF5</strain>
    </source>
</reference>
<protein>
    <recommendedName>
        <fullName evidence="1">Probable endolytic peptidoglycan transglycosylase RlpA</fullName>
        <ecNumber evidence="1">4.2.2.-</ecNumber>
    </recommendedName>
</protein>
<sequence length="226" mass="25857">MERFLGFRTPLGALGVVILLTLILSSCSVKTSYKEKGRVYNGKCPEYAKVWVHYCPTKYAYTDRYQHLSKVKIVNPRNGKSVKISLRLNKKVRGICLPKRLKKYLGKPFLGKVYLLRCGENGVKKCPKYIRGYASWYGGKFHGRKTASGIRFNQHEYYAAHRYLPFGTLLEVKNLKNGRKVIVKVVDRGPYVRGRHLDLSYAAAKKLGMIRDGVIPFEAKVLRCGY</sequence>
<feature type="signal peptide" evidence="1">
    <location>
        <begin position="1"/>
        <end position="26"/>
    </location>
</feature>
<feature type="chain" id="PRO_0000030801" description="Probable endolytic peptidoglycan transglycosylase RlpA" evidence="1">
    <location>
        <begin position="27"/>
        <end position="226"/>
    </location>
</feature>
<feature type="lipid moiety-binding region" description="N-palmitoyl cysteine" evidence="1">
    <location>
        <position position="27"/>
    </location>
</feature>
<feature type="lipid moiety-binding region" description="S-diacylglycerol cysteine" evidence="1">
    <location>
        <position position="27"/>
    </location>
</feature>
<comment type="function">
    <text evidence="1">Lytic transglycosylase with a strong preference for naked glycan strands that lack stem peptides.</text>
</comment>
<comment type="subcellular location">
    <subcellularLocation>
        <location evidence="1">Cell membrane</location>
        <topology evidence="1">Lipid-anchor</topology>
    </subcellularLocation>
</comment>
<comment type="similarity">
    <text evidence="1">Belongs to the RlpA family.</text>
</comment>
<organism>
    <name type="scientific">Aquifex aeolicus (strain VF5)</name>
    <dbReference type="NCBI Taxonomy" id="224324"/>
    <lineage>
        <taxon>Bacteria</taxon>
        <taxon>Pseudomonadati</taxon>
        <taxon>Aquificota</taxon>
        <taxon>Aquificia</taxon>
        <taxon>Aquificales</taxon>
        <taxon>Aquificaceae</taxon>
        <taxon>Aquifex</taxon>
    </lineage>
</organism>